<protein>
    <recommendedName>
        <fullName evidence="1">Probable transcriptional regulatory protein VC_A0006</fullName>
    </recommendedName>
</protein>
<sequence length="239" mass="26354">MGRSFEVRKASMAKTQGAKIKVYSKYGKEIYVCAKNGGTDPDMNLSLRHLITKAKKDQVPAHVIEKALDKASGGAGEDYQPARYEGFGPGGASVIVDCLTDNGNRTYQDVRQCFVKTGAKIGTPGVVAHMFDHQAVFQFQGDDEEAILEALMMADAEVTDIEHEDGVITVFAPNTEFFKVKTALNEAFPDLTLDVEEITFVPQNRTVVSGEDAEKFQKFLDMLDDCDDVQQVYHNADIE</sequence>
<reference key="1">
    <citation type="journal article" date="2000" name="Nature">
        <title>DNA sequence of both chromosomes of the cholera pathogen Vibrio cholerae.</title>
        <authorList>
            <person name="Heidelberg J.F."/>
            <person name="Eisen J.A."/>
            <person name="Nelson W.C."/>
            <person name="Clayton R.A."/>
            <person name="Gwinn M.L."/>
            <person name="Dodson R.J."/>
            <person name="Haft D.H."/>
            <person name="Hickey E.K."/>
            <person name="Peterson J.D."/>
            <person name="Umayam L.A."/>
            <person name="Gill S.R."/>
            <person name="Nelson K.E."/>
            <person name="Read T.D."/>
            <person name="Tettelin H."/>
            <person name="Richardson D.L."/>
            <person name="Ermolaeva M.D."/>
            <person name="Vamathevan J.J."/>
            <person name="Bass S."/>
            <person name="Qin H."/>
            <person name="Dragoi I."/>
            <person name="Sellers P."/>
            <person name="McDonald L.A."/>
            <person name="Utterback T.R."/>
            <person name="Fleischmann R.D."/>
            <person name="Nierman W.C."/>
            <person name="White O."/>
            <person name="Salzberg S.L."/>
            <person name="Smith H.O."/>
            <person name="Colwell R.R."/>
            <person name="Mekalanos J.J."/>
            <person name="Venter J.C."/>
            <person name="Fraser C.M."/>
        </authorList>
    </citation>
    <scope>NUCLEOTIDE SEQUENCE [LARGE SCALE GENOMIC DNA]</scope>
    <source>
        <strain>ATCC 39315 / El Tor Inaba N16961</strain>
    </source>
</reference>
<proteinExistence type="inferred from homology"/>
<keyword id="KW-0963">Cytoplasm</keyword>
<keyword id="KW-0238">DNA-binding</keyword>
<keyword id="KW-1185">Reference proteome</keyword>
<keyword id="KW-0804">Transcription</keyword>
<keyword id="KW-0805">Transcription regulation</keyword>
<gene>
    <name type="ordered locus">VC_A0006</name>
</gene>
<name>Y2806_VIBCH</name>
<dbReference type="EMBL" id="AE003853">
    <property type="protein sequence ID" value="AAF95920.1"/>
    <property type="molecule type" value="Genomic_DNA"/>
</dbReference>
<dbReference type="PIR" id="G82512">
    <property type="entry name" value="G82512"/>
</dbReference>
<dbReference type="RefSeq" id="NP_232407.1">
    <property type="nucleotide sequence ID" value="NC_002506.1"/>
</dbReference>
<dbReference type="RefSeq" id="WP_000533705.1">
    <property type="nucleotide sequence ID" value="NZ_LT906615.1"/>
</dbReference>
<dbReference type="SMR" id="Q9KNF8"/>
<dbReference type="STRING" id="243277.VC_A0006"/>
<dbReference type="DNASU" id="2612229"/>
<dbReference type="EnsemblBacteria" id="AAF95920">
    <property type="protein sequence ID" value="AAF95920"/>
    <property type="gene ID" value="VC_A0006"/>
</dbReference>
<dbReference type="KEGG" id="vch:VC_A0006"/>
<dbReference type="PATRIC" id="fig|243277.26.peg.2655"/>
<dbReference type="eggNOG" id="COG0217">
    <property type="taxonomic scope" value="Bacteria"/>
</dbReference>
<dbReference type="HOGENOM" id="CLU_062974_2_0_6"/>
<dbReference type="Proteomes" id="UP000000584">
    <property type="component" value="Chromosome 2"/>
</dbReference>
<dbReference type="GO" id="GO:0005829">
    <property type="term" value="C:cytosol"/>
    <property type="evidence" value="ECO:0000318"/>
    <property type="project" value="GO_Central"/>
</dbReference>
<dbReference type="GO" id="GO:0003677">
    <property type="term" value="F:DNA binding"/>
    <property type="evidence" value="ECO:0007669"/>
    <property type="project" value="UniProtKB-UniRule"/>
</dbReference>
<dbReference type="GO" id="GO:0006355">
    <property type="term" value="P:regulation of DNA-templated transcription"/>
    <property type="evidence" value="ECO:0007669"/>
    <property type="project" value="UniProtKB-UniRule"/>
</dbReference>
<dbReference type="FunFam" id="3.30.70.980:FF:000025">
    <property type="entry name" value="Probable transcriptional regulatory protein VCRC385_02559"/>
    <property type="match status" value="1"/>
</dbReference>
<dbReference type="FunFam" id="1.10.10.200:FF:000003">
    <property type="entry name" value="Probable transcriptional regulatory protein YeeN"/>
    <property type="match status" value="1"/>
</dbReference>
<dbReference type="Gene3D" id="1.10.10.200">
    <property type="match status" value="1"/>
</dbReference>
<dbReference type="Gene3D" id="3.30.70.980">
    <property type="match status" value="2"/>
</dbReference>
<dbReference type="HAMAP" id="MF_00693">
    <property type="entry name" value="Transcrip_reg_TACO1"/>
    <property type="match status" value="1"/>
</dbReference>
<dbReference type="InterPro" id="IPR017856">
    <property type="entry name" value="Integrase-like_N"/>
</dbReference>
<dbReference type="InterPro" id="IPR048300">
    <property type="entry name" value="TACO1_YebC-like_2nd/3rd_dom"/>
</dbReference>
<dbReference type="InterPro" id="IPR049083">
    <property type="entry name" value="TACO1_YebC_N"/>
</dbReference>
<dbReference type="InterPro" id="IPR002876">
    <property type="entry name" value="Transcrip_reg_TACO1-like"/>
</dbReference>
<dbReference type="InterPro" id="IPR026564">
    <property type="entry name" value="Transcrip_reg_TACO1-like_dom3"/>
</dbReference>
<dbReference type="InterPro" id="IPR029072">
    <property type="entry name" value="YebC-like"/>
</dbReference>
<dbReference type="NCBIfam" id="NF009044">
    <property type="entry name" value="PRK12378.1"/>
    <property type="match status" value="1"/>
</dbReference>
<dbReference type="PANTHER" id="PTHR12532">
    <property type="entry name" value="TRANSLATIONAL ACTIVATOR OF CYTOCHROME C OXIDASE 1"/>
    <property type="match status" value="1"/>
</dbReference>
<dbReference type="PANTHER" id="PTHR12532:SF0">
    <property type="entry name" value="TRANSLATIONAL ACTIVATOR OF CYTOCHROME C OXIDASE 1"/>
    <property type="match status" value="1"/>
</dbReference>
<dbReference type="Pfam" id="PF20772">
    <property type="entry name" value="TACO1_YebC_N"/>
    <property type="match status" value="1"/>
</dbReference>
<dbReference type="Pfam" id="PF01709">
    <property type="entry name" value="Transcrip_reg"/>
    <property type="match status" value="1"/>
</dbReference>
<dbReference type="SUPFAM" id="SSF75625">
    <property type="entry name" value="YebC-like"/>
    <property type="match status" value="1"/>
</dbReference>
<comment type="subcellular location">
    <subcellularLocation>
        <location evidence="1">Cytoplasm</location>
    </subcellularLocation>
</comment>
<comment type="similarity">
    <text evidence="1">Belongs to the TACO1 family.</text>
</comment>
<organism>
    <name type="scientific">Vibrio cholerae serotype O1 (strain ATCC 39315 / El Tor Inaba N16961)</name>
    <dbReference type="NCBI Taxonomy" id="243277"/>
    <lineage>
        <taxon>Bacteria</taxon>
        <taxon>Pseudomonadati</taxon>
        <taxon>Pseudomonadota</taxon>
        <taxon>Gammaproteobacteria</taxon>
        <taxon>Vibrionales</taxon>
        <taxon>Vibrionaceae</taxon>
        <taxon>Vibrio</taxon>
    </lineage>
</organism>
<evidence type="ECO:0000255" key="1">
    <source>
        <dbReference type="HAMAP-Rule" id="MF_00693"/>
    </source>
</evidence>
<feature type="chain" id="PRO_0000175926" description="Probable transcriptional regulatory protein VC_A0006">
    <location>
        <begin position="1"/>
        <end position="239"/>
    </location>
</feature>
<accession>Q9KNF8</accession>